<keyword id="KW-0378">Hydrolase</keyword>
<keyword id="KW-0391">Immunity</keyword>
<keyword id="KW-0399">Innate immunity</keyword>
<keyword id="KW-0611">Plant defense</keyword>
<keyword id="KW-1185">Reference proteome</keyword>
<gene>
    <name evidence="4" type="primary">MES7</name>
    <name evidence="6" type="ordered locus">At2g23560</name>
    <name evidence="7" type="ORF">F26B6.21</name>
</gene>
<sequence length="260" mass="28823">MDKNNQKKFVLVHGICHGAWCWYKVKAQLEAAGHSVTAVDLAASGVNMTSLDEIQTLKDYCKPLLEFLSSLGSDDDKVILVAHSMGGISASLAADIFPSKVAAIVFVAAFMPDISNPPAYVFQKLVKDVTQEVWMDTVFGKPDRPLEFALFGPEFMAKYLYNLSPLQDFELAKMSVRVSPFMTNNLAGTISFSEDRYGSVTRIYIVCGEDVAVPVDYQRGMINDFPVKEVLEIKDADHMPMFSKPQELCALLLEIADKYA</sequence>
<proteinExistence type="evidence at protein level"/>
<evidence type="ECO:0000250" key="1">
    <source>
        <dbReference type="UniProtKB" id="Q6RYA0"/>
    </source>
</evidence>
<evidence type="ECO:0000269" key="2">
    <source>
    </source>
</evidence>
<evidence type="ECO:0000269" key="3">
    <source>
    </source>
</evidence>
<evidence type="ECO:0000303" key="4">
    <source>
    </source>
</evidence>
<evidence type="ECO:0000305" key="5"/>
<evidence type="ECO:0000312" key="6">
    <source>
        <dbReference type="Araport" id="AT2G23560"/>
    </source>
</evidence>
<evidence type="ECO:0000312" key="7">
    <source>
        <dbReference type="EMBL" id="AAC23783.1"/>
    </source>
</evidence>
<feature type="chain" id="PRO_0000418181" description="Methylesterase 7">
    <location>
        <begin position="1"/>
        <end position="260"/>
    </location>
</feature>
<feature type="active site" description="Acyl-ester intermediate" evidence="1">
    <location>
        <position position="84"/>
    </location>
</feature>
<feature type="active site" description="Charge relay system" evidence="1">
    <location>
        <position position="210"/>
    </location>
</feature>
<feature type="active site" description="Charge relay system" evidence="1">
    <location>
        <position position="238"/>
    </location>
</feature>
<dbReference type="EC" id="3.1.1.-" evidence="2"/>
<dbReference type="EMBL" id="AC003040">
    <property type="protein sequence ID" value="AAC23783.1"/>
    <property type="molecule type" value="Genomic_DNA"/>
</dbReference>
<dbReference type="EMBL" id="CP002685">
    <property type="protein sequence ID" value="AEC07466.1"/>
    <property type="molecule type" value="Genomic_DNA"/>
</dbReference>
<dbReference type="EMBL" id="BT010709">
    <property type="protein sequence ID" value="AAR20766.1"/>
    <property type="molecule type" value="mRNA"/>
</dbReference>
<dbReference type="EMBL" id="BT012414">
    <property type="protein sequence ID" value="AAS92330.1"/>
    <property type="molecule type" value="mRNA"/>
</dbReference>
<dbReference type="PIR" id="T01145">
    <property type="entry name" value="T01145"/>
</dbReference>
<dbReference type="RefSeq" id="NP_179937.1">
    <property type="nucleotide sequence ID" value="NM_127920.3"/>
</dbReference>
<dbReference type="SMR" id="O80472"/>
<dbReference type="STRING" id="3702.O80472"/>
<dbReference type="ESTHER" id="arath-MES7">
    <property type="family name" value="Hydroxynitrile_lyase"/>
</dbReference>
<dbReference type="MEROPS" id="S33.A70"/>
<dbReference type="PaxDb" id="3702-AT2G23560.1"/>
<dbReference type="ProteomicsDB" id="238961"/>
<dbReference type="EnsemblPlants" id="AT2G23560.1">
    <property type="protein sequence ID" value="AT2G23560.1"/>
    <property type="gene ID" value="AT2G23560"/>
</dbReference>
<dbReference type="GeneID" id="816888"/>
<dbReference type="Gramene" id="AT2G23560.1">
    <property type="protein sequence ID" value="AT2G23560.1"/>
    <property type="gene ID" value="AT2G23560"/>
</dbReference>
<dbReference type="KEGG" id="ath:AT2G23560"/>
<dbReference type="Araport" id="AT2G23560"/>
<dbReference type="TAIR" id="AT2G23560">
    <property type="gene designation" value="MES7"/>
</dbReference>
<dbReference type="eggNOG" id="ENOG502QR2J">
    <property type="taxonomic scope" value="Eukaryota"/>
</dbReference>
<dbReference type="HOGENOM" id="CLU_046066_0_1_1"/>
<dbReference type="InParanoid" id="O80472"/>
<dbReference type="OMA" id="NIVREDY"/>
<dbReference type="OrthoDB" id="408373at2759"/>
<dbReference type="PhylomeDB" id="O80472"/>
<dbReference type="BioCyc" id="ARA:AT2G23560-MONOMER"/>
<dbReference type="PRO" id="PR:O80472"/>
<dbReference type="Proteomes" id="UP000006548">
    <property type="component" value="Chromosome 2"/>
</dbReference>
<dbReference type="ExpressionAtlas" id="O80472">
    <property type="expression patterns" value="baseline and differential"/>
</dbReference>
<dbReference type="GO" id="GO:0016788">
    <property type="term" value="F:hydrolase activity, acting on ester bonds"/>
    <property type="evidence" value="ECO:0000314"/>
    <property type="project" value="TAIR"/>
</dbReference>
<dbReference type="GO" id="GO:0080030">
    <property type="term" value="F:methyl indole-3-acetate esterase activity"/>
    <property type="evidence" value="ECO:0000314"/>
    <property type="project" value="TAIR"/>
</dbReference>
<dbReference type="GO" id="GO:0080031">
    <property type="term" value="F:methyl salicylate esterase activity"/>
    <property type="evidence" value="ECO:0000315"/>
    <property type="project" value="TAIR"/>
</dbReference>
<dbReference type="GO" id="GO:0050832">
    <property type="term" value="P:defense response to fungus"/>
    <property type="evidence" value="ECO:0000304"/>
    <property type="project" value="TAIR"/>
</dbReference>
<dbReference type="GO" id="GO:0045087">
    <property type="term" value="P:innate immune response"/>
    <property type="evidence" value="ECO:0007669"/>
    <property type="project" value="UniProtKB-KW"/>
</dbReference>
<dbReference type="GO" id="GO:0009696">
    <property type="term" value="P:salicylic acid metabolic process"/>
    <property type="evidence" value="ECO:0000314"/>
    <property type="project" value="TAIR"/>
</dbReference>
<dbReference type="GO" id="GO:0009627">
    <property type="term" value="P:systemic acquired resistance"/>
    <property type="evidence" value="ECO:0000316"/>
    <property type="project" value="TAIR"/>
</dbReference>
<dbReference type="FunFam" id="3.40.50.1820:FF:000051">
    <property type="entry name" value="(S)-hydroxynitrile lyase"/>
    <property type="match status" value="1"/>
</dbReference>
<dbReference type="Gene3D" id="3.40.50.1820">
    <property type="entry name" value="alpha/beta hydrolase"/>
    <property type="match status" value="1"/>
</dbReference>
<dbReference type="InterPro" id="IPR000073">
    <property type="entry name" value="AB_hydrolase_1"/>
</dbReference>
<dbReference type="InterPro" id="IPR029058">
    <property type="entry name" value="AB_hydrolase_fold"/>
</dbReference>
<dbReference type="InterPro" id="IPR045889">
    <property type="entry name" value="MES/HNL"/>
</dbReference>
<dbReference type="PANTHER" id="PTHR10992:SF1007">
    <property type="entry name" value="METHYLESTERASE 3-RELATED"/>
    <property type="match status" value="1"/>
</dbReference>
<dbReference type="PANTHER" id="PTHR10992">
    <property type="entry name" value="METHYLESTERASE FAMILY MEMBER"/>
    <property type="match status" value="1"/>
</dbReference>
<dbReference type="Pfam" id="PF12697">
    <property type="entry name" value="Abhydrolase_6"/>
    <property type="match status" value="1"/>
</dbReference>
<dbReference type="SUPFAM" id="SSF53474">
    <property type="entry name" value="alpha/beta-Hydrolases"/>
    <property type="match status" value="1"/>
</dbReference>
<reference key="1">
    <citation type="journal article" date="1999" name="Nature">
        <title>Sequence and analysis of chromosome 2 of the plant Arabidopsis thaliana.</title>
        <authorList>
            <person name="Lin X."/>
            <person name="Kaul S."/>
            <person name="Rounsley S.D."/>
            <person name="Shea T.P."/>
            <person name="Benito M.-I."/>
            <person name="Town C.D."/>
            <person name="Fujii C.Y."/>
            <person name="Mason T.M."/>
            <person name="Bowman C.L."/>
            <person name="Barnstead M.E."/>
            <person name="Feldblyum T.V."/>
            <person name="Buell C.R."/>
            <person name="Ketchum K.A."/>
            <person name="Lee J.J."/>
            <person name="Ronning C.M."/>
            <person name="Koo H.L."/>
            <person name="Moffat K.S."/>
            <person name="Cronin L.A."/>
            <person name="Shen M."/>
            <person name="Pai G."/>
            <person name="Van Aken S."/>
            <person name="Umayam L."/>
            <person name="Tallon L.J."/>
            <person name="Gill J.E."/>
            <person name="Adams M.D."/>
            <person name="Carrera A.J."/>
            <person name="Creasy T.H."/>
            <person name="Goodman H.M."/>
            <person name="Somerville C.R."/>
            <person name="Copenhaver G.P."/>
            <person name="Preuss D."/>
            <person name="Nierman W.C."/>
            <person name="White O."/>
            <person name="Eisen J.A."/>
            <person name="Salzberg S.L."/>
            <person name="Fraser C.M."/>
            <person name="Venter J.C."/>
        </authorList>
    </citation>
    <scope>NUCLEOTIDE SEQUENCE [LARGE SCALE GENOMIC DNA]</scope>
    <source>
        <strain>cv. Columbia</strain>
    </source>
</reference>
<reference key="2">
    <citation type="journal article" date="2017" name="Plant J.">
        <title>Araport11: a complete reannotation of the Arabidopsis thaliana reference genome.</title>
        <authorList>
            <person name="Cheng C.Y."/>
            <person name="Krishnakumar V."/>
            <person name="Chan A.P."/>
            <person name="Thibaud-Nissen F."/>
            <person name="Schobel S."/>
            <person name="Town C.D."/>
        </authorList>
    </citation>
    <scope>GENOME REANNOTATION</scope>
    <source>
        <strain>cv. Columbia</strain>
    </source>
</reference>
<reference key="3">
    <citation type="submission" date="2004-04" db="EMBL/GenBank/DDBJ databases">
        <title>Arabidopsis ORF clones.</title>
        <authorList>
            <person name="Shinn P."/>
            <person name="Chen H."/>
            <person name="Cheuk R.F."/>
            <person name="Kim C.J."/>
            <person name="Ecker J.R."/>
        </authorList>
    </citation>
    <scope>NUCLEOTIDE SEQUENCE [LARGE SCALE MRNA]</scope>
    <source>
        <strain>cv. Columbia</strain>
    </source>
</reference>
<reference key="4">
    <citation type="journal article" date="2008" name="Plant J.">
        <title>Identification of likely orthologs of tobacco salicylic acid-binding protein 2 and their role in systemic acquired resistance in Arabidopsis thaliana.</title>
        <authorList>
            <person name="Vlot A.C."/>
            <person name="Liu P.P."/>
            <person name="Cameron R.K."/>
            <person name="Park S.W."/>
            <person name="Yang Y."/>
            <person name="Kumar D."/>
            <person name="Zhou F."/>
            <person name="Padukkavidana T."/>
            <person name="Gustafsson C."/>
            <person name="Pichersky E."/>
            <person name="Klessig D.F."/>
        </authorList>
    </citation>
    <scope>FUNCTION</scope>
    <scope>ACTIVITY REGULATION</scope>
    <scope>BIOPHYSICOCHEMICAL PROPERTIES</scope>
    <scope>INDUCTION BY PATHOGEN</scope>
</reference>
<reference key="5">
    <citation type="journal article" date="2008" name="Plant Physiol.">
        <title>Inactive methyl indole-3-acetic acid ester can be hydrolyzed and activated by several esterases belonging to the AtMES esterase family of Arabidopsis.</title>
        <authorList>
            <person name="Yang Y."/>
            <person name="Xu R."/>
            <person name="Ma C.J."/>
            <person name="Vlot A.C."/>
            <person name="Klessig D.F."/>
            <person name="Pichersky E."/>
        </authorList>
    </citation>
    <scope>GENE FAMILY</scope>
    <scope>FUNCTION</scope>
    <scope>CATALYTIC ACTIVITY</scope>
    <scope>PATHWAY</scope>
</reference>
<protein>
    <recommendedName>
        <fullName evidence="4">Methylesterase 7</fullName>
        <shortName evidence="4">AtMES7</shortName>
        <ecNumber evidence="2">3.1.1.-</ecNumber>
    </recommendedName>
</protein>
<organism>
    <name type="scientific">Arabidopsis thaliana</name>
    <name type="common">Mouse-ear cress</name>
    <dbReference type="NCBI Taxonomy" id="3702"/>
    <lineage>
        <taxon>Eukaryota</taxon>
        <taxon>Viridiplantae</taxon>
        <taxon>Streptophyta</taxon>
        <taxon>Embryophyta</taxon>
        <taxon>Tracheophyta</taxon>
        <taxon>Spermatophyta</taxon>
        <taxon>Magnoliopsida</taxon>
        <taxon>eudicotyledons</taxon>
        <taxon>Gunneridae</taxon>
        <taxon>Pentapetalae</taxon>
        <taxon>rosids</taxon>
        <taxon>malvids</taxon>
        <taxon>Brassicales</taxon>
        <taxon>Brassicaceae</taxon>
        <taxon>Camelineae</taxon>
        <taxon>Arabidopsis</taxon>
    </lineage>
</organism>
<name>MES7_ARATH</name>
<comment type="function">
    <text evidence="2 3">Methylesterase shown to have carboxylesterase activity, methyl indole-3-acetic acid (MeIAA) esterase activity and methyl salicylate (MeSA) esterase activity in vitro. Required to convert methyl salicylate (MeSA) to salicylic acid (SA) as part of the signal transduction pathways that activate systemic acquired resistance in systemic tissue. MeSA is believed to be an inactive form that needs to be demethylated to exert a biological effect.</text>
</comment>
<comment type="catalytic activity">
    <reaction evidence="2">
        <text>methyl (indol-3-yl)acetate + H2O = (indol-3-yl)acetate + methanol + H(+)</text>
        <dbReference type="Rhea" id="RHEA:32919"/>
        <dbReference type="ChEBI" id="CHEBI:15377"/>
        <dbReference type="ChEBI" id="CHEBI:15378"/>
        <dbReference type="ChEBI" id="CHEBI:17790"/>
        <dbReference type="ChEBI" id="CHEBI:30854"/>
        <dbReference type="ChEBI" id="CHEBI:72782"/>
    </reaction>
    <physiologicalReaction direction="left-to-right" evidence="2">
        <dbReference type="Rhea" id="RHEA:32920"/>
    </physiologicalReaction>
</comment>
<comment type="catalytic activity">
    <reaction evidence="2">
        <text>methyl salicylate + H2O = salicylate + methanol + H(+)</text>
        <dbReference type="Rhea" id="RHEA:33611"/>
        <dbReference type="ChEBI" id="CHEBI:15377"/>
        <dbReference type="ChEBI" id="CHEBI:15378"/>
        <dbReference type="ChEBI" id="CHEBI:17790"/>
        <dbReference type="ChEBI" id="CHEBI:30762"/>
        <dbReference type="ChEBI" id="CHEBI:31832"/>
    </reaction>
    <physiologicalReaction direction="left-to-right" evidence="2">
        <dbReference type="Rhea" id="RHEA:33612"/>
    </physiologicalReaction>
</comment>
<comment type="activity regulation">
    <text evidence="3">Esterase activity is down-regulated by salicylic acid (SA).</text>
</comment>
<comment type="biophysicochemical properties">
    <kinetics>
        <Vmax evidence="3">12.82 nmol/min/ug enzyme with methyl salicylate (MeSA) as substrate</Vmax>
    </kinetics>
</comment>
<comment type="pathway">
    <text evidence="2">Plant hormone biosynthesis.</text>
</comment>
<comment type="induction">
    <text evidence="3">By pathogen infection.</text>
</comment>
<comment type="miscellaneous">
    <text>Expression of MES7 can restore systemic acquired resistance in SAR-deficient tobacco plants.</text>
</comment>
<comment type="similarity">
    <text evidence="5">Belongs to the AB hydrolase superfamily. Methylesterase family.</text>
</comment>
<accession>O80472</accession>